<protein>
    <recommendedName>
        <fullName>Magnesium-protoporphyrin IX monomethyl ester [oxidative] cyclase, chloroplastic</fullName>
        <shortName>Mg-protoporphyrin IX monomethyl ester oxidative cyclase</shortName>
        <ecNumber>1.14.13.81</ecNumber>
    </recommendedName>
    <alternativeName>
        <fullName>Protein Xantha-l</fullName>
    </alternativeName>
</protein>
<evidence type="ECO:0000250" key="1"/>
<evidence type="ECO:0000255" key="2"/>
<evidence type="ECO:0000269" key="3">
    <source>
    </source>
</evidence>
<evidence type="ECO:0000305" key="4"/>
<comment type="function">
    <text evidence="3">Catalyzes the formation of the isocyclic ring in chlorophyll biosynthesis. Mediates the cyclase reaction, which results in the formation of divinylprotochlorophyllide (Pchlide) characteristic of all chlorophylls from magnesium-protoporphyrin IX 13-monomethyl ester (MgPMME).</text>
</comment>
<comment type="catalytic activity">
    <reaction evidence="3">
        <text>Mg-protoporphyrin IX 13-monomethyl ester + 3 NADPH + 3 O2 + 2 H(+) = 3,8-divinyl protochlorophyllide a + 3 NADP(+) + 5 H2O</text>
        <dbReference type="Rhea" id="RHEA:33235"/>
        <dbReference type="ChEBI" id="CHEBI:15377"/>
        <dbReference type="ChEBI" id="CHEBI:15378"/>
        <dbReference type="ChEBI" id="CHEBI:15379"/>
        <dbReference type="ChEBI" id="CHEBI:57783"/>
        <dbReference type="ChEBI" id="CHEBI:58349"/>
        <dbReference type="ChEBI" id="CHEBI:58632"/>
        <dbReference type="ChEBI" id="CHEBI:60491"/>
        <dbReference type="EC" id="1.14.13.81"/>
    </reaction>
</comment>
<comment type="cofactor">
    <cofactor evidence="1">
        <name>Fe cation</name>
        <dbReference type="ChEBI" id="CHEBI:24875"/>
    </cofactor>
</comment>
<comment type="pathway">
    <text evidence="3">Porphyrin-containing compound metabolism; chlorophyll biosynthesis.</text>
</comment>
<comment type="subcellular location">
    <subcellularLocation>
        <location evidence="4">Plastid</location>
        <location evidence="4">Chloroplast membrane</location>
        <topology evidence="4">Peripheral membrane protein</topology>
    </subcellularLocation>
</comment>
<comment type="similarity">
    <text evidence="4">Belongs to the AcsF family.</text>
</comment>
<sequence length="417" mass="48161">MASAMELSLLNPAMHHYGIAAKTASHLPVVPARRASSGAVRFRVRAAAAAPPAPAAKPGSPKKRGKTEVNESLLTPRFYTTDFDEMEQLFNAEINKQLNQDEFDALLQEFKTDYNQTHFIRNPEFKEAADKMQGPLRQIFVEFLERSCTAEFSGFLLYKELGRRLKKTNPVVAEIFSLMSRDEARHAGFLNKGLSDFNLALDLGFLTKARKYTFFKPKFIFYATYLSEKIGYWRYITIFRHLKANPEYQVYPIFKYFENWCQDENRHGDFFSALLKAQPQFLNDWKAKLWSRFFCLSVYITMYLNDCQRSAFYEGIGLNTKEFDMHVIYETNRTTARIFPAVPDVENPEFKRKLDRMVDINLKIISIGESNDLPLVKNLKRVPLIAQLVSEIIAAYLMPPIESGSVDFAEFEPKLVY</sequence>
<feature type="transit peptide" description="Chloroplast" evidence="2">
    <location>
        <begin position="1"/>
        <end position="45"/>
    </location>
</feature>
<feature type="chain" id="PRO_0000000603" description="Magnesium-protoporphyrin IX monomethyl ester [oxidative] cyclase, chloroplastic">
    <location>
        <begin position="46"/>
        <end position="417"/>
    </location>
</feature>
<feature type="mutagenesis site" description="In xantha-l(81); induces accumulation of MgPMME." evidence="3">
    <original>G</original>
    <variation>E</variation>
    <location>
        <position position="154"/>
    </location>
</feature>
<feature type="mutagenesis site" description="In xantha-l(35); induces accumulation of MgPMME." evidence="3">
    <original>S</original>
    <variation>F</variation>
    <location>
        <position position="180"/>
    </location>
</feature>
<gene>
    <name type="primary">CRD1</name>
</gene>
<dbReference type="EC" id="1.14.13.81"/>
<dbReference type="EMBL" id="AY887063">
    <property type="protein sequence ID" value="AAW80518.1"/>
    <property type="molecule type" value="Genomic_DNA"/>
</dbReference>
<dbReference type="SMR" id="Q5EFU4"/>
<dbReference type="BRENDA" id="1.14.13.81">
    <property type="organism ID" value="2687"/>
</dbReference>
<dbReference type="UniPathway" id="UPA00668"/>
<dbReference type="ExpressionAtlas" id="Q5EFU4">
    <property type="expression patterns" value="baseline and differential"/>
</dbReference>
<dbReference type="GO" id="GO:0031969">
    <property type="term" value="C:chloroplast membrane"/>
    <property type="evidence" value="ECO:0007669"/>
    <property type="project" value="UniProtKB-SubCell"/>
</dbReference>
<dbReference type="GO" id="GO:0009535">
    <property type="term" value="C:chloroplast thylakoid membrane"/>
    <property type="evidence" value="ECO:0007669"/>
    <property type="project" value="TreeGrafter"/>
</dbReference>
<dbReference type="GO" id="GO:0048529">
    <property type="term" value="F:magnesium-protoporphyrin IX monomethyl ester (oxidative) cyclase activity"/>
    <property type="evidence" value="ECO:0007669"/>
    <property type="project" value="UniProtKB-EC"/>
</dbReference>
<dbReference type="GO" id="GO:0046872">
    <property type="term" value="F:metal ion binding"/>
    <property type="evidence" value="ECO:0007669"/>
    <property type="project" value="UniProtKB-KW"/>
</dbReference>
<dbReference type="GO" id="GO:0015995">
    <property type="term" value="P:chlorophyll biosynthetic process"/>
    <property type="evidence" value="ECO:0007669"/>
    <property type="project" value="UniProtKB-UniPathway"/>
</dbReference>
<dbReference type="GO" id="GO:0015979">
    <property type="term" value="P:photosynthesis"/>
    <property type="evidence" value="ECO:0007669"/>
    <property type="project" value="UniProtKB-KW"/>
</dbReference>
<dbReference type="CDD" id="cd01047">
    <property type="entry name" value="ACSF"/>
    <property type="match status" value="1"/>
</dbReference>
<dbReference type="HAMAP" id="MF_01840">
    <property type="entry name" value="AcsF"/>
    <property type="match status" value="1"/>
</dbReference>
<dbReference type="InterPro" id="IPR008434">
    <property type="entry name" value="AcsF"/>
</dbReference>
<dbReference type="InterPro" id="IPR009078">
    <property type="entry name" value="Ferritin-like_SF"/>
</dbReference>
<dbReference type="InterPro" id="IPR003251">
    <property type="entry name" value="Rr_diiron-bd_dom"/>
</dbReference>
<dbReference type="NCBIfam" id="TIGR02029">
    <property type="entry name" value="AcsF"/>
    <property type="match status" value="1"/>
</dbReference>
<dbReference type="NCBIfam" id="NF010172">
    <property type="entry name" value="PRK13654.1"/>
    <property type="match status" value="1"/>
</dbReference>
<dbReference type="PANTHER" id="PTHR31053">
    <property type="entry name" value="MAGNESIUM-PROTOPORPHYRIN IX MONOMETHYL ESTER [OXIDATIVE] CYCLASE, CHLOROPLASTIC"/>
    <property type="match status" value="1"/>
</dbReference>
<dbReference type="PANTHER" id="PTHR31053:SF2">
    <property type="entry name" value="MAGNESIUM-PROTOPORPHYRIN IX MONOMETHYL ESTER [OXIDATIVE] CYCLASE, CHLOROPLASTIC"/>
    <property type="match status" value="1"/>
</dbReference>
<dbReference type="Pfam" id="PF02915">
    <property type="entry name" value="Rubrerythrin"/>
    <property type="match status" value="1"/>
</dbReference>
<dbReference type="SUPFAM" id="SSF47240">
    <property type="entry name" value="Ferritin-like"/>
    <property type="match status" value="1"/>
</dbReference>
<organism>
    <name type="scientific">Hordeum vulgare</name>
    <name type="common">Barley</name>
    <dbReference type="NCBI Taxonomy" id="4513"/>
    <lineage>
        <taxon>Eukaryota</taxon>
        <taxon>Viridiplantae</taxon>
        <taxon>Streptophyta</taxon>
        <taxon>Embryophyta</taxon>
        <taxon>Tracheophyta</taxon>
        <taxon>Spermatophyta</taxon>
        <taxon>Magnoliopsida</taxon>
        <taxon>Liliopsida</taxon>
        <taxon>Poales</taxon>
        <taxon>Poaceae</taxon>
        <taxon>BOP clade</taxon>
        <taxon>Pooideae</taxon>
        <taxon>Triticodae</taxon>
        <taxon>Triticeae</taxon>
        <taxon>Hordeinae</taxon>
        <taxon>Hordeum</taxon>
    </lineage>
</organism>
<name>CRD1_HORVU</name>
<accession>Q5EFU4</accession>
<reference key="1">
    <citation type="journal article" date="2005" name="Proc. Natl. Acad. Sci. U.S.A.">
        <title>Xantha-l encodes a membrane subunit of the aerobic Mg-protoporphyrin IX monomethyl ester cyclase involved in chlorophyll biosynthesis.</title>
        <authorList>
            <person name="Rzeznicka K."/>
            <person name="Walker C.J."/>
            <person name="Westergren T."/>
            <person name="Kannangara C.G."/>
            <person name="von Wettstein D."/>
            <person name="Merchant S."/>
            <person name="Gough S.P."/>
            <person name="Hansson M."/>
        </authorList>
    </citation>
    <scope>NUCLEOTIDE SEQUENCE [GENOMIC DNA]</scope>
    <scope>ENZYME ACTIVITY</scope>
    <scope>PATHWAY</scope>
    <scope>FUNCTION</scope>
    <scope>SUBCELLULAR LOCATION</scope>
    <scope>MUTAGENESIS OF GLY-154 AND SER-180</scope>
</reference>
<keyword id="KW-0149">Chlorophyll biosynthesis</keyword>
<keyword id="KW-0150">Chloroplast</keyword>
<keyword id="KW-0408">Iron</keyword>
<keyword id="KW-0472">Membrane</keyword>
<keyword id="KW-0479">Metal-binding</keyword>
<keyword id="KW-0521">NADP</keyword>
<keyword id="KW-0560">Oxidoreductase</keyword>
<keyword id="KW-0602">Photosynthesis</keyword>
<keyword id="KW-0934">Plastid</keyword>
<keyword id="KW-0809">Transit peptide</keyword>
<proteinExistence type="evidence at protein level"/>